<dbReference type="EC" id="2.5.1.7" evidence="1"/>
<dbReference type="EMBL" id="CP000776">
    <property type="protein sequence ID" value="ABS52384.1"/>
    <property type="molecule type" value="Genomic_DNA"/>
</dbReference>
<dbReference type="RefSeq" id="WP_012108773.1">
    <property type="nucleotide sequence ID" value="NC_009714.1"/>
</dbReference>
<dbReference type="SMR" id="A7I1U0"/>
<dbReference type="STRING" id="360107.CHAB381_0919"/>
<dbReference type="KEGG" id="cha:CHAB381_0919"/>
<dbReference type="eggNOG" id="COG0766">
    <property type="taxonomic scope" value="Bacteria"/>
</dbReference>
<dbReference type="HOGENOM" id="CLU_027387_0_0_7"/>
<dbReference type="OrthoDB" id="9803760at2"/>
<dbReference type="UniPathway" id="UPA00219"/>
<dbReference type="Proteomes" id="UP000002407">
    <property type="component" value="Chromosome"/>
</dbReference>
<dbReference type="GO" id="GO:0005737">
    <property type="term" value="C:cytoplasm"/>
    <property type="evidence" value="ECO:0007669"/>
    <property type="project" value="UniProtKB-SubCell"/>
</dbReference>
<dbReference type="GO" id="GO:0008760">
    <property type="term" value="F:UDP-N-acetylglucosamine 1-carboxyvinyltransferase activity"/>
    <property type="evidence" value="ECO:0007669"/>
    <property type="project" value="UniProtKB-UniRule"/>
</dbReference>
<dbReference type="GO" id="GO:0051301">
    <property type="term" value="P:cell division"/>
    <property type="evidence" value="ECO:0007669"/>
    <property type="project" value="UniProtKB-KW"/>
</dbReference>
<dbReference type="GO" id="GO:0071555">
    <property type="term" value="P:cell wall organization"/>
    <property type="evidence" value="ECO:0007669"/>
    <property type="project" value="UniProtKB-KW"/>
</dbReference>
<dbReference type="GO" id="GO:0009252">
    <property type="term" value="P:peptidoglycan biosynthetic process"/>
    <property type="evidence" value="ECO:0007669"/>
    <property type="project" value="UniProtKB-UniRule"/>
</dbReference>
<dbReference type="GO" id="GO:0008360">
    <property type="term" value="P:regulation of cell shape"/>
    <property type="evidence" value="ECO:0007669"/>
    <property type="project" value="UniProtKB-KW"/>
</dbReference>
<dbReference type="GO" id="GO:0019277">
    <property type="term" value="P:UDP-N-acetylgalactosamine biosynthetic process"/>
    <property type="evidence" value="ECO:0007669"/>
    <property type="project" value="InterPro"/>
</dbReference>
<dbReference type="CDD" id="cd01555">
    <property type="entry name" value="UdpNAET"/>
    <property type="match status" value="1"/>
</dbReference>
<dbReference type="FunFam" id="3.65.10.10:FF:000001">
    <property type="entry name" value="UDP-N-acetylglucosamine 1-carboxyvinyltransferase"/>
    <property type="match status" value="1"/>
</dbReference>
<dbReference type="Gene3D" id="3.65.10.10">
    <property type="entry name" value="Enolpyruvate transferase domain"/>
    <property type="match status" value="2"/>
</dbReference>
<dbReference type="HAMAP" id="MF_00111">
    <property type="entry name" value="MurA"/>
    <property type="match status" value="1"/>
</dbReference>
<dbReference type="InterPro" id="IPR001986">
    <property type="entry name" value="Enolpyruvate_Tfrase_dom"/>
</dbReference>
<dbReference type="InterPro" id="IPR036968">
    <property type="entry name" value="Enolpyruvate_Tfrase_sf"/>
</dbReference>
<dbReference type="InterPro" id="IPR050068">
    <property type="entry name" value="MurA_subfamily"/>
</dbReference>
<dbReference type="InterPro" id="IPR013792">
    <property type="entry name" value="RNA3'P_cycl/enolpyr_Trfase_a/b"/>
</dbReference>
<dbReference type="InterPro" id="IPR005750">
    <property type="entry name" value="UDP_GlcNAc_COvinyl_MurA"/>
</dbReference>
<dbReference type="NCBIfam" id="TIGR01072">
    <property type="entry name" value="murA"/>
    <property type="match status" value="1"/>
</dbReference>
<dbReference type="NCBIfam" id="NF006873">
    <property type="entry name" value="PRK09369.1"/>
    <property type="match status" value="1"/>
</dbReference>
<dbReference type="PANTHER" id="PTHR43783">
    <property type="entry name" value="UDP-N-ACETYLGLUCOSAMINE 1-CARBOXYVINYLTRANSFERASE"/>
    <property type="match status" value="1"/>
</dbReference>
<dbReference type="PANTHER" id="PTHR43783:SF1">
    <property type="entry name" value="UDP-N-ACETYLGLUCOSAMINE 1-CARBOXYVINYLTRANSFERASE"/>
    <property type="match status" value="1"/>
</dbReference>
<dbReference type="Pfam" id="PF00275">
    <property type="entry name" value="EPSP_synthase"/>
    <property type="match status" value="1"/>
</dbReference>
<dbReference type="SUPFAM" id="SSF55205">
    <property type="entry name" value="EPT/RTPC-like"/>
    <property type="match status" value="1"/>
</dbReference>
<sequence>MDFLQINGGAKLNGKVKISGAKNAALPLIAMSILAGNDIKISNVPNVADIKTLAQLLRNLGASAEFLNENSLKINTNDINSTKATYDIVRKMRASILVLGPLLARFGHCEVSLPGGCAIGARPIDLHLSALEKMGAEIDIKDGYVVCKGKLKGATISFDKITVTGTENIVMAAALAEGKTKIINAAKEPEVVQLCEMINKSGVKIEGIGTDDLTIYGSGGKLLKFSDFSVIPDRIEAGTYLCAGAITKSKITITNANPNHLVSVLAKFNDMGFNFEINDDEITIIPPKTIKPTEIITSEYPGFPTDMQAQFMALACVADGVSVIDERLFENRFMHVSELSRMGADIKLNGHIATINGTHLNAADVMATDLRASSALVLAALVAKGTSRVHRIYHLDRGYENLELKLRNLGADIQRASE</sequence>
<accession>A7I1U0</accession>
<organism>
    <name type="scientific">Campylobacter hominis (strain ATCC BAA-381 / DSM 21671 / CCUG 45161 / LMG 19568 / NCTC 13146 / CH001A)</name>
    <dbReference type="NCBI Taxonomy" id="360107"/>
    <lineage>
        <taxon>Bacteria</taxon>
        <taxon>Pseudomonadati</taxon>
        <taxon>Campylobacterota</taxon>
        <taxon>Epsilonproteobacteria</taxon>
        <taxon>Campylobacterales</taxon>
        <taxon>Campylobacteraceae</taxon>
        <taxon>Campylobacter</taxon>
    </lineage>
</organism>
<protein>
    <recommendedName>
        <fullName evidence="1">UDP-N-acetylglucosamine 1-carboxyvinyltransferase</fullName>
        <ecNumber evidence="1">2.5.1.7</ecNumber>
    </recommendedName>
    <alternativeName>
        <fullName evidence="1">Enoylpyruvate transferase</fullName>
    </alternativeName>
    <alternativeName>
        <fullName evidence="1">UDP-N-acetylglucosamine enolpyruvyl transferase</fullName>
        <shortName evidence="1">EPT</shortName>
    </alternativeName>
</protein>
<gene>
    <name evidence="1" type="primary">murA</name>
    <name type="ordered locus">CHAB381_0919</name>
</gene>
<feature type="chain" id="PRO_1000023025" description="UDP-N-acetylglucosamine 1-carboxyvinyltransferase">
    <location>
        <begin position="1"/>
        <end position="418"/>
    </location>
</feature>
<feature type="active site" description="Proton donor" evidence="1">
    <location>
        <position position="117"/>
    </location>
</feature>
<feature type="binding site" evidence="1">
    <location>
        <begin position="22"/>
        <end position="23"/>
    </location>
    <ligand>
        <name>phosphoenolpyruvate</name>
        <dbReference type="ChEBI" id="CHEBI:58702"/>
    </ligand>
</feature>
<feature type="binding site" evidence="1">
    <location>
        <position position="93"/>
    </location>
    <ligand>
        <name>UDP-N-acetyl-alpha-D-glucosamine</name>
        <dbReference type="ChEBI" id="CHEBI:57705"/>
    </ligand>
</feature>
<feature type="binding site" evidence="1">
    <location>
        <begin position="122"/>
        <end position="126"/>
    </location>
    <ligand>
        <name>UDP-N-acetyl-alpha-D-glucosamine</name>
        <dbReference type="ChEBI" id="CHEBI:57705"/>
    </ligand>
</feature>
<feature type="binding site" evidence="1">
    <location>
        <position position="306"/>
    </location>
    <ligand>
        <name>UDP-N-acetyl-alpha-D-glucosamine</name>
        <dbReference type="ChEBI" id="CHEBI:57705"/>
    </ligand>
</feature>
<feature type="binding site" evidence="1">
    <location>
        <position position="328"/>
    </location>
    <ligand>
        <name>UDP-N-acetyl-alpha-D-glucosamine</name>
        <dbReference type="ChEBI" id="CHEBI:57705"/>
    </ligand>
</feature>
<feature type="modified residue" description="2-(S-cysteinyl)pyruvic acid O-phosphothioketal" evidence="1">
    <location>
        <position position="117"/>
    </location>
</feature>
<evidence type="ECO:0000255" key="1">
    <source>
        <dbReference type="HAMAP-Rule" id="MF_00111"/>
    </source>
</evidence>
<keyword id="KW-0131">Cell cycle</keyword>
<keyword id="KW-0132">Cell division</keyword>
<keyword id="KW-0133">Cell shape</keyword>
<keyword id="KW-0961">Cell wall biogenesis/degradation</keyword>
<keyword id="KW-0963">Cytoplasm</keyword>
<keyword id="KW-0573">Peptidoglycan synthesis</keyword>
<keyword id="KW-0670">Pyruvate</keyword>
<keyword id="KW-1185">Reference proteome</keyword>
<keyword id="KW-0808">Transferase</keyword>
<name>MURA_CAMHC</name>
<comment type="function">
    <text evidence="1">Cell wall formation. Adds enolpyruvyl to UDP-N-acetylglucosamine.</text>
</comment>
<comment type="catalytic activity">
    <reaction evidence="1">
        <text>phosphoenolpyruvate + UDP-N-acetyl-alpha-D-glucosamine = UDP-N-acetyl-3-O-(1-carboxyvinyl)-alpha-D-glucosamine + phosphate</text>
        <dbReference type="Rhea" id="RHEA:18681"/>
        <dbReference type="ChEBI" id="CHEBI:43474"/>
        <dbReference type="ChEBI" id="CHEBI:57705"/>
        <dbReference type="ChEBI" id="CHEBI:58702"/>
        <dbReference type="ChEBI" id="CHEBI:68483"/>
        <dbReference type="EC" id="2.5.1.7"/>
    </reaction>
</comment>
<comment type="pathway">
    <text evidence="1">Cell wall biogenesis; peptidoglycan biosynthesis.</text>
</comment>
<comment type="subcellular location">
    <subcellularLocation>
        <location evidence="1">Cytoplasm</location>
    </subcellularLocation>
</comment>
<comment type="similarity">
    <text evidence="1">Belongs to the EPSP synthase family. MurA subfamily.</text>
</comment>
<reference key="1">
    <citation type="submission" date="2007-07" db="EMBL/GenBank/DDBJ databases">
        <title>Complete genome sequence of Campylobacter hominis ATCC BAA-381, a commensal isolated from the human gastrointestinal tract.</title>
        <authorList>
            <person name="Fouts D.E."/>
            <person name="Mongodin E.F."/>
            <person name="Puiu D."/>
            <person name="Sebastian Y."/>
            <person name="Miller W.G."/>
            <person name="Mandrell R.E."/>
            <person name="Nelson K.E."/>
        </authorList>
    </citation>
    <scope>NUCLEOTIDE SEQUENCE [LARGE SCALE GENOMIC DNA]</scope>
    <source>
        <strain>ATCC BAA-381 / DSM 21671 / CCUG 45161 / LMG 19568 / NCTC 13146 / CH001A</strain>
    </source>
</reference>
<proteinExistence type="inferred from homology"/>